<proteinExistence type="evidence at protein level"/>
<reference key="1">
    <citation type="journal article" date="2013" name="PLoS ONE">
        <title>Silencing of the host factor eIF(iso)4E gene confers plum pox virus resistance in plum.</title>
        <authorList>
            <person name="Wang X."/>
            <person name="Kohalmi S.E."/>
            <person name="Svircev A."/>
            <person name="Wang A."/>
            <person name="Sanfacon H."/>
            <person name="Tian L."/>
        </authorList>
    </citation>
    <scope>NUCLEOTIDE SEQUENCE [MRNA]</scope>
    <scope>FUNCTION (MICROBIAL INFECTION)</scope>
    <scope>DISRUPTION PHENOTYPE (MICROBIAL INFECTION)</scope>
    <scope>TISSUE SPECIFICITY</scope>
    <scope>SUBUNIT (MICROBIAL INFECTION)</scope>
</reference>
<name>IF4E1_PRUDO</name>
<protein>
    <recommendedName>
        <fullName evidence="7">Eukaryotic translation initiation factor 4E-1</fullName>
        <shortName evidence="7">eIF-4E-1</shortName>
        <shortName evidence="7">eIF4E-1</shortName>
    </recommendedName>
    <alternativeName>
        <fullName evidence="8">eIF-4F 25 kDa subunit</fullName>
    </alternativeName>
    <alternativeName>
        <fullName evidence="8">eIF-4F p26 subunit</fullName>
    </alternativeName>
    <alternativeName>
        <fullName evidence="8">mRNA cap-binding protein</fullName>
    </alternativeName>
</protein>
<feature type="chain" id="PRO_0000454054" description="Eukaryotic translation initiation factor 4E-1">
    <location>
        <begin position="1"/>
        <end position="233"/>
    </location>
</feature>
<feature type="region of interest" description="Disordered" evidence="5">
    <location>
        <begin position="1"/>
        <end position="51"/>
    </location>
</feature>
<feature type="region of interest" description="EIF4G-binding" evidence="4">
    <location>
        <begin position="55"/>
        <end position="58"/>
    </location>
</feature>
<feature type="region of interest" description="EIF4G-binding" evidence="4">
    <location>
        <begin position="65"/>
        <end position="104"/>
    </location>
</feature>
<feature type="region of interest" description="EIF4G-binding" evidence="4">
    <location>
        <begin position="152"/>
        <end position="161"/>
    </location>
</feature>
<feature type="compositionally biased region" description="Basic and acidic residues" evidence="5">
    <location>
        <begin position="14"/>
        <end position="26"/>
    </location>
</feature>
<feature type="compositionally biased region" description="Acidic residues" evidence="5">
    <location>
        <begin position="27"/>
        <end position="41"/>
    </location>
</feature>
<feature type="binding site" evidence="3">
    <location>
        <begin position="76"/>
        <end position="81"/>
    </location>
    <ligand>
        <name>mRNA</name>
        <dbReference type="ChEBI" id="CHEBI:33699"/>
    </ligand>
    <ligandPart>
        <name>N(7)-methylguanosine 5'-triphosphate group</name>
        <dbReference type="ChEBI" id="CHEBI:74429"/>
        <note>m7GTP residue in mRNA cap</note>
    </ligandPart>
</feature>
<feature type="binding site" evidence="3">
    <location>
        <position position="108"/>
    </location>
    <ligand>
        <name>mRNA</name>
        <dbReference type="ChEBI" id="CHEBI:33699"/>
    </ligand>
    <ligandPart>
        <name>N(7)-methylguanosine 5'-triphosphate group</name>
        <dbReference type="ChEBI" id="CHEBI:74429"/>
        <note>m7GTP residue in mRNA cap</note>
    </ligandPart>
</feature>
<feature type="binding site" evidence="3">
    <location>
        <begin position="126"/>
        <end position="127"/>
    </location>
    <ligand>
        <name>mRNA</name>
        <dbReference type="ChEBI" id="CHEBI:33699"/>
    </ligand>
    <ligandPart>
        <name>N(7)-methylguanosine 5'-triphosphate group</name>
        <dbReference type="ChEBI" id="CHEBI:74429"/>
        <note>m7GTP residue in mRNA cap</note>
    </ligandPart>
</feature>
<feature type="binding site" evidence="3">
    <location>
        <begin position="176"/>
        <end position="181"/>
    </location>
    <ligand>
        <name>mRNA</name>
        <dbReference type="ChEBI" id="CHEBI:33699"/>
    </ligand>
    <ligandPart>
        <name>N(7)-methylguanosine 5'-triphosphate group</name>
        <dbReference type="ChEBI" id="CHEBI:74429"/>
        <note>m7GTP residue in mRNA cap</note>
    </ligandPart>
</feature>
<feature type="binding site" evidence="4">
    <location>
        <begin position="221"/>
        <end position="225"/>
    </location>
    <ligand>
        <name>mRNA</name>
        <dbReference type="ChEBI" id="CHEBI:33699"/>
    </ligand>
    <ligandPart>
        <name>N(7)-methylguanosine 5'-triphosphate group</name>
        <dbReference type="ChEBI" id="CHEBI:74429"/>
        <note>m7GTP residue in mRNA cap</note>
    </ligandPart>
</feature>
<feature type="disulfide bond" evidence="3">
    <location>
        <begin position="131"/>
        <end position="169"/>
    </location>
</feature>
<dbReference type="EMBL" id="JX137116">
    <property type="protein sequence ID" value="AGE81987.1"/>
    <property type="molecule type" value="mRNA"/>
</dbReference>
<dbReference type="SMR" id="M1JJT8"/>
<dbReference type="GO" id="GO:0016281">
    <property type="term" value="C:eukaryotic translation initiation factor 4F complex"/>
    <property type="evidence" value="ECO:0007669"/>
    <property type="project" value="TreeGrafter"/>
</dbReference>
<dbReference type="GO" id="GO:0005634">
    <property type="term" value="C:nucleus"/>
    <property type="evidence" value="ECO:0007669"/>
    <property type="project" value="UniProtKB-SubCell"/>
</dbReference>
<dbReference type="GO" id="GO:0000340">
    <property type="term" value="F:RNA 7-methylguanosine cap binding"/>
    <property type="evidence" value="ECO:0007669"/>
    <property type="project" value="TreeGrafter"/>
</dbReference>
<dbReference type="GO" id="GO:0003743">
    <property type="term" value="F:translation initiation factor activity"/>
    <property type="evidence" value="ECO:0007669"/>
    <property type="project" value="UniProtKB-KW"/>
</dbReference>
<dbReference type="GO" id="GO:0051607">
    <property type="term" value="P:defense response to virus"/>
    <property type="evidence" value="ECO:0007669"/>
    <property type="project" value="UniProtKB-ARBA"/>
</dbReference>
<dbReference type="GO" id="GO:0006417">
    <property type="term" value="P:regulation of translation"/>
    <property type="evidence" value="ECO:0007669"/>
    <property type="project" value="UniProtKB-KW"/>
</dbReference>
<dbReference type="FunFam" id="3.30.760.10:FF:000003">
    <property type="entry name" value="Eukaryotic translation initiation factor 4E"/>
    <property type="match status" value="1"/>
</dbReference>
<dbReference type="Gene3D" id="3.30.760.10">
    <property type="entry name" value="RNA Cap, Translation Initiation Factor Eif4e"/>
    <property type="match status" value="1"/>
</dbReference>
<dbReference type="InterPro" id="IPR023398">
    <property type="entry name" value="TIF_eIF4e-like"/>
</dbReference>
<dbReference type="InterPro" id="IPR001040">
    <property type="entry name" value="TIF_eIF_4E"/>
</dbReference>
<dbReference type="InterPro" id="IPR019770">
    <property type="entry name" value="TIF_eIF_4E_CS"/>
</dbReference>
<dbReference type="PANTHER" id="PTHR11960">
    <property type="entry name" value="EUKARYOTIC TRANSLATION INITIATION FACTOR 4E RELATED"/>
    <property type="match status" value="1"/>
</dbReference>
<dbReference type="PANTHER" id="PTHR11960:SF8">
    <property type="entry name" value="EUKARYOTIC TRANSLATION INITIATION FACTOR 4E1-RELATED"/>
    <property type="match status" value="1"/>
</dbReference>
<dbReference type="Pfam" id="PF01652">
    <property type="entry name" value="IF4E"/>
    <property type="match status" value="1"/>
</dbReference>
<dbReference type="SUPFAM" id="SSF55418">
    <property type="entry name" value="eIF4e-like"/>
    <property type="match status" value="1"/>
</dbReference>
<dbReference type="PROSITE" id="PS00813">
    <property type="entry name" value="IF4E"/>
    <property type="match status" value="1"/>
</dbReference>
<keyword id="KW-0963">Cytoplasm</keyword>
<keyword id="KW-1015">Disulfide bond</keyword>
<keyword id="KW-0396">Initiation factor</keyword>
<keyword id="KW-0539">Nucleus</keyword>
<keyword id="KW-0648">Protein biosynthesis</keyword>
<keyword id="KW-0694">RNA-binding</keyword>
<keyword id="KW-0810">Translation regulation</keyword>
<accession>M1JJT8</accession>
<gene>
    <name evidence="7" type="primary">eIF4E</name>
</gene>
<sequence>MVVEDALKTSASEDQAKTETNPKPREEDDEPEEGEIVGDEESASKPSKGIAPESHALEHSWTFWFDSPAAKSAKTKQEDWGSSIRPIYTFSTVEEFWSIYNNIRHPSKLAIGTDFHCFKYKIEPKWEDPVCANGGKWTVTLPKGKSDTSWLYTLLGMIGEQFDHGDEICGAVVNVRNRQEKISIWTKNAINEAAQLSIGKQWKGLLDYNETIGFIFHEDAMRHERSAKNKYVV</sequence>
<comment type="function">
    <text evidence="1">Component of the protein complex eIF4F, which is involved in the recognition of the mRNA cap, ATP-dependent unwinding of 5'-terminal secondary structure and recruitment of mRNA to the ribosome (By similarity). Recognizes and binds the 7-methylguanosine-containing mRNA cap during an early step in the initiation of protein synthesis and facilitates ribosome binding by inducing the unwinding of the mRNAs secondary structures (By similarity).</text>
</comment>
<comment type="function">
    <text evidence="6">(Microbial infection) Not involved in the plum pox virus (PPV) strain D infection process.</text>
</comment>
<comment type="subunit">
    <text evidence="3">EIF4F is a multi-subunit complex, the composition of which varies with external and internal environmental conditions (By similarity). It is composed of at least EIF4A, EIF4E and EIF4G (By similarity). EIF4E is also known to interact with other partners (By similarity). In higher plants two isoforms of EIF4F have been identified, named isoform EIF4F and isoform EIF(iso)4F (By similarity). Isoform EIF4F has subunits p220 and p26, whereas isoform EIF(iso)4F has subunits p82 and p28 (By similarity).</text>
</comment>
<comment type="subunit">
    <text evidence="6">(Microbial infection) Does not interact with the VPg of Plum pox virus (PPV) strain D.</text>
</comment>
<comment type="subcellular location">
    <subcellularLocation>
        <location evidence="2">Nucleus</location>
    </subcellularLocation>
    <subcellularLocation>
        <location evidence="2">Cytoplasm</location>
    </subcellularLocation>
</comment>
<comment type="tissue specificity">
    <text evidence="6">Mostly expressed in leaves, flower buds, leaf buds and anthers, to a lower extent in roots, stems and green immature fruit, and, at low levels, in petals.</text>
</comment>
<comment type="PTM">
    <text evidence="3">According to the redox status, the Cys-131-Cys-169 disulfide bridge may have a role in regulating protein function by affecting its ability to bind capped mRNA.</text>
</comment>
<comment type="disruption phenotype">
    <text evidence="6">(Microbial infection) Not observable resistance to Plum pox virus (PPV) strain D.</text>
</comment>
<comment type="similarity">
    <text evidence="8">Belongs to the eukaryotic initiation factor 4E family.</text>
</comment>
<evidence type="ECO:0000250" key="1">
    <source>
        <dbReference type="UniProtKB" id="A0A075QQ08"/>
    </source>
</evidence>
<evidence type="ECO:0000250" key="2">
    <source>
        <dbReference type="UniProtKB" id="C6ZJZ3"/>
    </source>
</evidence>
<evidence type="ECO:0000250" key="3">
    <source>
        <dbReference type="UniProtKB" id="P29557"/>
    </source>
</evidence>
<evidence type="ECO:0000250" key="4">
    <source>
        <dbReference type="UniProtKB" id="Q00LS8"/>
    </source>
</evidence>
<evidence type="ECO:0000256" key="5">
    <source>
        <dbReference type="SAM" id="MobiDB-lite"/>
    </source>
</evidence>
<evidence type="ECO:0000269" key="6">
    <source>
    </source>
</evidence>
<evidence type="ECO:0000303" key="7">
    <source>
    </source>
</evidence>
<evidence type="ECO:0000305" key="8"/>
<organism>
    <name type="scientific">Prunus domestica</name>
    <name type="common">Garden plum</name>
    <dbReference type="NCBI Taxonomy" id="3758"/>
    <lineage>
        <taxon>Eukaryota</taxon>
        <taxon>Viridiplantae</taxon>
        <taxon>Streptophyta</taxon>
        <taxon>Embryophyta</taxon>
        <taxon>Tracheophyta</taxon>
        <taxon>Spermatophyta</taxon>
        <taxon>Magnoliopsida</taxon>
        <taxon>eudicotyledons</taxon>
        <taxon>Gunneridae</taxon>
        <taxon>Pentapetalae</taxon>
        <taxon>rosids</taxon>
        <taxon>fabids</taxon>
        <taxon>Rosales</taxon>
        <taxon>Rosaceae</taxon>
        <taxon>Amygdaloideae</taxon>
        <taxon>Amygdaleae</taxon>
        <taxon>Prunus</taxon>
    </lineage>
</organism>